<accession>A7TGR0</accession>
<feature type="chain" id="PRO_0000333578" description="J protein JJJ2">
    <location>
        <begin position="1"/>
        <end position="520"/>
    </location>
</feature>
<feature type="domain" description="J" evidence="2">
    <location>
        <begin position="7"/>
        <end position="71"/>
    </location>
</feature>
<feature type="region of interest" description="Disordered" evidence="3">
    <location>
        <begin position="82"/>
        <end position="257"/>
    </location>
</feature>
<feature type="region of interest" description="Disordered" evidence="3">
    <location>
        <begin position="389"/>
        <end position="409"/>
    </location>
</feature>
<feature type="compositionally biased region" description="Low complexity" evidence="3">
    <location>
        <begin position="91"/>
        <end position="100"/>
    </location>
</feature>
<feature type="compositionally biased region" description="Polar residues" evidence="3">
    <location>
        <begin position="152"/>
        <end position="182"/>
    </location>
</feature>
<feature type="compositionally biased region" description="Basic and acidic residues" evidence="3">
    <location>
        <begin position="397"/>
        <end position="409"/>
    </location>
</feature>
<name>JJJ2_VANPO</name>
<reference key="1">
    <citation type="journal article" date="2007" name="Proc. Natl. Acad. Sci. U.S.A.">
        <title>Independent sorting-out of thousands of duplicated gene pairs in two yeast species descended from a whole-genome duplication.</title>
        <authorList>
            <person name="Scannell D.R."/>
            <person name="Frank A.C."/>
            <person name="Conant G.C."/>
            <person name="Byrne K.P."/>
            <person name="Woolfit M."/>
            <person name="Wolfe K.H."/>
        </authorList>
    </citation>
    <scope>NUCLEOTIDE SEQUENCE [LARGE SCALE GENOMIC DNA]</scope>
    <source>
        <strain>ATCC 22028 / DSM 70294 / BCRC 21397 / CBS 2163 / NBRC 10782 / NRRL Y-8283 / UCD 57-17</strain>
    </source>
</reference>
<sequence length="520" mass="60670">MKIDETTYYSVLGLPTTANKKDIHKSYLRLARKLHPDKSKSNDFEELFKVVVQAHSILTDISSKQEYDAILKRKGLSNYTPLGYKEHTKKQNQSNNLNQQDASKNSKKNDGVPTQSKVTRKNKPYEQQPYGFGLDFNEGSKMKKDKQKGRNTSKNSKEQQGSQETTNTSENLQRNAKGNKNNKNPRKDRFHTLDNSLDTENDNKRRNIKKAKDRTSKDQNTYSHTNYQRKRNKVKFTQGSIRMRNPEATQSNPDLQNDWDPLKDIISQFGNSNIQDDFGIENIKPSSDPRTFELEDLSLDCEYDFVESNSRVRRANMQNVFINEMDRLMINDPLDMSSIKHSLYSIPYTKRQKTSQSTYTFNDQNYRFTERLPRQENSEGPFGEIPSVFESSTGTMENHRSDFNLRGRPETRENDNIIIPEMMHFPDAVTSKEEEVSLKTRFNHFNEDCNRTKEYILKVLKNRISVDKDLSDMMTVPEYHSLILATKSFDVHLSKQLLELNELQFNAGQRYTELFKSIQY</sequence>
<evidence type="ECO:0000250" key="1"/>
<evidence type="ECO:0000255" key="2">
    <source>
        <dbReference type="PROSITE-ProRule" id="PRU00286"/>
    </source>
</evidence>
<evidence type="ECO:0000256" key="3">
    <source>
        <dbReference type="SAM" id="MobiDB-lite"/>
    </source>
</evidence>
<comment type="subcellular location">
    <subcellularLocation>
        <location evidence="1">Cytoplasm</location>
    </subcellularLocation>
    <subcellularLocation>
        <location evidence="1">Nucleus</location>
    </subcellularLocation>
</comment>
<protein>
    <recommendedName>
        <fullName>J protein JJJ2</fullName>
    </recommendedName>
</protein>
<keyword id="KW-0143">Chaperone</keyword>
<keyword id="KW-0963">Cytoplasm</keyword>
<keyword id="KW-0539">Nucleus</keyword>
<keyword id="KW-1185">Reference proteome</keyword>
<organism>
    <name type="scientific">Vanderwaltozyma polyspora (strain ATCC 22028 / DSM 70294 / BCRC 21397 / CBS 2163 / NBRC 10782 / NRRL Y-8283 / UCD 57-17)</name>
    <name type="common">Kluyveromyces polysporus</name>
    <dbReference type="NCBI Taxonomy" id="436907"/>
    <lineage>
        <taxon>Eukaryota</taxon>
        <taxon>Fungi</taxon>
        <taxon>Dikarya</taxon>
        <taxon>Ascomycota</taxon>
        <taxon>Saccharomycotina</taxon>
        <taxon>Saccharomycetes</taxon>
        <taxon>Saccharomycetales</taxon>
        <taxon>Saccharomycetaceae</taxon>
        <taxon>Vanderwaltozyma</taxon>
    </lineage>
</organism>
<gene>
    <name type="primary">JJJ2</name>
    <name type="ORF">Kpol_2001p27</name>
</gene>
<dbReference type="EMBL" id="DS480388">
    <property type="protein sequence ID" value="EDO18523.1"/>
    <property type="molecule type" value="Genomic_DNA"/>
</dbReference>
<dbReference type="RefSeq" id="XP_001646381.1">
    <property type="nucleotide sequence ID" value="XM_001646331.1"/>
</dbReference>
<dbReference type="SMR" id="A7TGR0"/>
<dbReference type="FunCoup" id="A7TGR0">
    <property type="interactions" value="54"/>
</dbReference>
<dbReference type="STRING" id="436907.A7TGR0"/>
<dbReference type="GeneID" id="5546819"/>
<dbReference type="KEGG" id="vpo:Kpol_2001p27"/>
<dbReference type="eggNOG" id="KOG0714">
    <property type="taxonomic scope" value="Eukaryota"/>
</dbReference>
<dbReference type="HOGENOM" id="CLU_554520_0_0_1"/>
<dbReference type="InParanoid" id="A7TGR0"/>
<dbReference type="OrthoDB" id="10250354at2759"/>
<dbReference type="PhylomeDB" id="A7TGR0"/>
<dbReference type="Proteomes" id="UP000000267">
    <property type="component" value="Unassembled WGS sequence"/>
</dbReference>
<dbReference type="GO" id="GO:0005737">
    <property type="term" value="C:cytoplasm"/>
    <property type="evidence" value="ECO:0007669"/>
    <property type="project" value="UniProtKB-SubCell"/>
</dbReference>
<dbReference type="GO" id="GO:0005634">
    <property type="term" value="C:nucleus"/>
    <property type="evidence" value="ECO:0007669"/>
    <property type="project" value="UniProtKB-SubCell"/>
</dbReference>
<dbReference type="CDD" id="cd06257">
    <property type="entry name" value="DnaJ"/>
    <property type="match status" value="1"/>
</dbReference>
<dbReference type="Gene3D" id="1.10.287.110">
    <property type="entry name" value="DnaJ domain"/>
    <property type="match status" value="1"/>
</dbReference>
<dbReference type="InterPro" id="IPR051938">
    <property type="entry name" value="Apopto_cytoskel_mod"/>
</dbReference>
<dbReference type="InterPro" id="IPR001623">
    <property type="entry name" value="DnaJ_domain"/>
</dbReference>
<dbReference type="InterPro" id="IPR018253">
    <property type="entry name" value="DnaJ_domain_CS"/>
</dbReference>
<dbReference type="InterPro" id="IPR036869">
    <property type="entry name" value="J_dom_sf"/>
</dbReference>
<dbReference type="PANTHER" id="PTHR44145">
    <property type="entry name" value="DNAJ HOMOLOG SUBFAMILY A MEMBER 3, MITOCHONDRIAL"/>
    <property type="match status" value="1"/>
</dbReference>
<dbReference type="PANTHER" id="PTHR44145:SF3">
    <property type="entry name" value="DNAJ HOMOLOG SUBFAMILY A MEMBER 3, MITOCHONDRIAL"/>
    <property type="match status" value="1"/>
</dbReference>
<dbReference type="Pfam" id="PF00226">
    <property type="entry name" value="DnaJ"/>
    <property type="match status" value="1"/>
</dbReference>
<dbReference type="PRINTS" id="PR00625">
    <property type="entry name" value="JDOMAIN"/>
</dbReference>
<dbReference type="SMART" id="SM00271">
    <property type="entry name" value="DnaJ"/>
    <property type="match status" value="1"/>
</dbReference>
<dbReference type="SUPFAM" id="SSF46565">
    <property type="entry name" value="Chaperone J-domain"/>
    <property type="match status" value="1"/>
</dbReference>
<dbReference type="PROSITE" id="PS00636">
    <property type="entry name" value="DNAJ_1"/>
    <property type="match status" value="1"/>
</dbReference>
<dbReference type="PROSITE" id="PS50076">
    <property type="entry name" value="DNAJ_2"/>
    <property type="match status" value="1"/>
</dbReference>
<proteinExistence type="inferred from homology"/>